<gene>
    <name evidence="1" type="primary">fbp</name>
    <name type="ordered locus">MS1615</name>
</gene>
<proteinExistence type="inferred from homology"/>
<evidence type="ECO:0000255" key="1">
    <source>
        <dbReference type="HAMAP-Rule" id="MF_01855"/>
    </source>
</evidence>
<dbReference type="EC" id="3.1.3.11" evidence="1"/>
<dbReference type="EMBL" id="AE016827">
    <property type="protein sequence ID" value="AAU38222.1"/>
    <property type="molecule type" value="Genomic_DNA"/>
</dbReference>
<dbReference type="RefSeq" id="WP_011200783.1">
    <property type="nucleotide sequence ID" value="NC_006300.1"/>
</dbReference>
<dbReference type="SMR" id="Q65S38"/>
<dbReference type="STRING" id="221988.MS1615"/>
<dbReference type="KEGG" id="msu:MS1615"/>
<dbReference type="eggNOG" id="COG0158">
    <property type="taxonomic scope" value="Bacteria"/>
</dbReference>
<dbReference type="HOGENOM" id="CLU_039977_2_2_6"/>
<dbReference type="OrthoDB" id="9806756at2"/>
<dbReference type="UniPathway" id="UPA00138"/>
<dbReference type="Proteomes" id="UP000000607">
    <property type="component" value="Chromosome"/>
</dbReference>
<dbReference type="GO" id="GO:0005829">
    <property type="term" value="C:cytosol"/>
    <property type="evidence" value="ECO:0007669"/>
    <property type="project" value="TreeGrafter"/>
</dbReference>
<dbReference type="GO" id="GO:0042132">
    <property type="term" value="F:fructose 1,6-bisphosphate 1-phosphatase activity"/>
    <property type="evidence" value="ECO:0007669"/>
    <property type="project" value="UniProtKB-UniRule"/>
</dbReference>
<dbReference type="GO" id="GO:0000287">
    <property type="term" value="F:magnesium ion binding"/>
    <property type="evidence" value="ECO:0007669"/>
    <property type="project" value="UniProtKB-UniRule"/>
</dbReference>
<dbReference type="GO" id="GO:0030388">
    <property type="term" value="P:fructose 1,6-bisphosphate metabolic process"/>
    <property type="evidence" value="ECO:0007669"/>
    <property type="project" value="TreeGrafter"/>
</dbReference>
<dbReference type="GO" id="GO:0006002">
    <property type="term" value="P:fructose 6-phosphate metabolic process"/>
    <property type="evidence" value="ECO:0007669"/>
    <property type="project" value="TreeGrafter"/>
</dbReference>
<dbReference type="GO" id="GO:0006000">
    <property type="term" value="P:fructose metabolic process"/>
    <property type="evidence" value="ECO:0007669"/>
    <property type="project" value="TreeGrafter"/>
</dbReference>
<dbReference type="GO" id="GO:0006094">
    <property type="term" value="P:gluconeogenesis"/>
    <property type="evidence" value="ECO:0007669"/>
    <property type="project" value="UniProtKB-UniRule"/>
</dbReference>
<dbReference type="GO" id="GO:0005986">
    <property type="term" value="P:sucrose biosynthetic process"/>
    <property type="evidence" value="ECO:0007669"/>
    <property type="project" value="TreeGrafter"/>
</dbReference>
<dbReference type="CDD" id="cd00354">
    <property type="entry name" value="FBPase"/>
    <property type="match status" value="1"/>
</dbReference>
<dbReference type="FunFam" id="3.30.540.10:FF:000002">
    <property type="entry name" value="Fructose-1,6-bisphosphatase class 1"/>
    <property type="match status" value="1"/>
</dbReference>
<dbReference type="FunFam" id="3.40.190.80:FF:000001">
    <property type="entry name" value="Fructose-1,6-bisphosphatase class 1"/>
    <property type="match status" value="1"/>
</dbReference>
<dbReference type="Gene3D" id="3.40.190.80">
    <property type="match status" value="1"/>
</dbReference>
<dbReference type="Gene3D" id="3.30.540.10">
    <property type="entry name" value="Fructose-1,6-Bisphosphatase, subunit A, domain 1"/>
    <property type="match status" value="1"/>
</dbReference>
<dbReference type="HAMAP" id="MF_01855">
    <property type="entry name" value="FBPase_class1"/>
    <property type="match status" value="1"/>
</dbReference>
<dbReference type="InterPro" id="IPR044015">
    <property type="entry name" value="FBPase_C_dom"/>
</dbReference>
<dbReference type="InterPro" id="IPR000146">
    <property type="entry name" value="FBPase_class-1"/>
</dbReference>
<dbReference type="InterPro" id="IPR033391">
    <property type="entry name" value="FBPase_N"/>
</dbReference>
<dbReference type="InterPro" id="IPR028343">
    <property type="entry name" value="FBPtase"/>
</dbReference>
<dbReference type="InterPro" id="IPR020548">
    <property type="entry name" value="Fructose_bisphosphatase_AS"/>
</dbReference>
<dbReference type="NCBIfam" id="NF006778">
    <property type="entry name" value="PRK09293.1-1"/>
    <property type="match status" value="1"/>
</dbReference>
<dbReference type="PANTHER" id="PTHR11556">
    <property type="entry name" value="FRUCTOSE-1,6-BISPHOSPHATASE-RELATED"/>
    <property type="match status" value="1"/>
</dbReference>
<dbReference type="PANTHER" id="PTHR11556:SF35">
    <property type="entry name" value="SEDOHEPTULOSE-1,7-BISPHOSPHATASE, CHLOROPLASTIC"/>
    <property type="match status" value="1"/>
</dbReference>
<dbReference type="Pfam" id="PF00316">
    <property type="entry name" value="FBPase"/>
    <property type="match status" value="1"/>
</dbReference>
<dbReference type="Pfam" id="PF18913">
    <property type="entry name" value="FBPase_C"/>
    <property type="match status" value="1"/>
</dbReference>
<dbReference type="PIRSF" id="PIRSF500210">
    <property type="entry name" value="FBPtase"/>
    <property type="match status" value="1"/>
</dbReference>
<dbReference type="PIRSF" id="PIRSF000904">
    <property type="entry name" value="FBPtase_SBPase"/>
    <property type="match status" value="1"/>
</dbReference>
<dbReference type="PRINTS" id="PR00115">
    <property type="entry name" value="F16BPHPHTASE"/>
</dbReference>
<dbReference type="SUPFAM" id="SSF56655">
    <property type="entry name" value="Carbohydrate phosphatase"/>
    <property type="match status" value="1"/>
</dbReference>
<dbReference type="PROSITE" id="PS00124">
    <property type="entry name" value="FBPASE"/>
    <property type="match status" value="1"/>
</dbReference>
<comment type="catalytic activity">
    <reaction evidence="1">
        <text>beta-D-fructose 1,6-bisphosphate + H2O = beta-D-fructose 6-phosphate + phosphate</text>
        <dbReference type="Rhea" id="RHEA:11064"/>
        <dbReference type="ChEBI" id="CHEBI:15377"/>
        <dbReference type="ChEBI" id="CHEBI:32966"/>
        <dbReference type="ChEBI" id="CHEBI:43474"/>
        <dbReference type="ChEBI" id="CHEBI:57634"/>
        <dbReference type="EC" id="3.1.3.11"/>
    </reaction>
</comment>
<comment type="cofactor">
    <cofactor evidence="1">
        <name>Mg(2+)</name>
        <dbReference type="ChEBI" id="CHEBI:18420"/>
    </cofactor>
    <text evidence="1">Binds 2 magnesium ions per subunit.</text>
</comment>
<comment type="pathway">
    <text evidence="1">Carbohydrate biosynthesis; gluconeogenesis.</text>
</comment>
<comment type="subunit">
    <text evidence="1">Homotetramer.</text>
</comment>
<comment type="subcellular location">
    <subcellularLocation>
        <location evidence="1">Cytoplasm</location>
    </subcellularLocation>
</comment>
<comment type="similarity">
    <text evidence="1">Belongs to the FBPase class 1 family.</text>
</comment>
<reference key="1">
    <citation type="journal article" date="2004" name="Nat. Biotechnol.">
        <title>The genome sequence of the capnophilic rumen bacterium Mannheimia succiniciproducens.</title>
        <authorList>
            <person name="Hong S.H."/>
            <person name="Kim J.S."/>
            <person name="Lee S.Y."/>
            <person name="In Y.H."/>
            <person name="Choi S.S."/>
            <person name="Rih J.-K."/>
            <person name="Kim C.H."/>
            <person name="Jeong H."/>
            <person name="Hur C.G."/>
            <person name="Kim J.J."/>
        </authorList>
    </citation>
    <scope>NUCLEOTIDE SEQUENCE [LARGE SCALE GENOMIC DNA]</scope>
    <source>
        <strain>KCTC 0769BP / MBEL55E</strain>
    </source>
</reference>
<name>F16PA_MANSM</name>
<organism>
    <name type="scientific">Mannheimia succiniciproducens (strain KCTC 0769BP / MBEL55E)</name>
    <dbReference type="NCBI Taxonomy" id="221988"/>
    <lineage>
        <taxon>Bacteria</taxon>
        <taxon>Pseudomonadati</taxon>
        <taxon>Pseudomonadota</taxon>
        <taxon>Gammaproteobacteria</taxon>
        <taxon>Pasteurellales</taxon>
        <taxon>Pasteurellaceae</taxon>
        <taxon>Basfia</taxon>
    </lineage>
</organism>
<keyword id="KW-0119">Carbohydrate metabolism</keyword>
<keyword id="KW-0963">Cytoplasm</keyword>
<keyword id="KW-0378">Hydrolase</keyword>
<keyword id="KW-0460">Magnesium</keyword>
<keyword id="KW-0479">Metal-binding</keyword>
<protein>
    <recommendedName>
        <fullName evidence="1">Fructose-1,6-bisphosphatase class 1</fullName>
        <shortName evidence="1">FBPase class 1</shortName>
        <ecNumber evidence="1">3.1.3.11</ecNumber>
    </recommendedName>
    <alternativeName>
        <fullName evidence="1">D-fructose-1,6-bisphosphate 1-phosphohydrolase class 1</fullName>
    </alternativeName>
</protein>
<accession>Q65S38</accession>
<sequence length="335" mass="37352">MKTLDEFIVDRQAEYPNAKGALTGILSSIRLVAKVIHRDINRAGLTNNILGFSGIDNVQGEHQMKLDLFAHNMMKQALMAREEVAGFASEEEENFVAFDTERGRNARYVILTDPLDGSSNIDVNVSVGTIFSIYRRVSPIGSPVTLEDFMQPGNRQVAAGYVVYGSSTMLVYTTGNGVNGFTYDPSLGTFCLSHENMQIPATGKIYSINEGQYLKFPMGVKKYIKYCQEEDAATNRPYTSRYIGSLVADFHRNLLKGGIYIYPHATNYPQGKLRLLYEGNPIAFLAEQAGGIASDGYNRVLDIQPSQLHQRVPLFVGSKQMVEKAQDFMHQFKED</sequence>
<feature type="chain" id="PRO_0000364593" description="Fructose-1,6-bisphosphatase class 1">
    <location>
        <begin position="1"/>
        <end position="335"/>
    </location>
</feature>
<feature type="binding site" evidence="1">
    <location>
        <position position="90"/>
    </location>
    <ligand>
        <name>Mg(2+)</name>
        <dbReference type="ChEBI" id="CHEBI:18420"/>
        <label>1</label>
    </ligand>
</feature>
<feature type="binding site" evidence="1">
    <location>
        <position position="113"/>
    </location>
    <ligand>
        <name>Mg(2+)</name>
        <dbReference type="ChEBI" id="CHEBI:18420"/>
        <label>1</label>
    </ligand>
</feature>
<feature type="binding site" evidence="1">
    <location>
        <position position="113"/>
    </location>
    <ligand>
        <name>Mg(2+)</name>
        <dbReference type="ChEBI" id="CHEBI:18420"/>
        <label>2</label>
    </ligand>
</feature>
<feature type="binding site" evidence="1">
    <location>
        <position position="115"/>
    </location>
    <ligand>
        <name>Mg(2+)</name>
        <dbReference type="ChEBI" id="CHEBI:18420"/>
        <label>1</label>
    </ligand>
</feature>
<feature type="binding site" evidence="1">
    <location>
        <begin position="116"/>
        <end position="119"/>
    </location>
    <ligand>
        <name>substrate</name>
    </ligand>
</feature>
<feature type="binding site" evidence="1">
    <location>
        <position position="116"/>
    </location>
    <ligand>
        <name>Mg(2+)</name>
        <dbReference type="ChEBI" id="CHEBI:18420"/>
        <label>2</label>
    </ligand>
</feature>
<feature type="binding site" evidence="1">
    <location>
        <position position="209"/>
    </location>
    <ligand>
        <name>substrate</name>
    </ligand>
</feature>
<feature type="binding site" evidence="1">
    <location>
        <position position="242"/>
    </location>
    <ligand>
        <name>substrate</name>
    </ligand>
</feature>
<feature type="binding site" evidence="1">
    <location>
        <position position="272"/>
    </location>
    <ligand>
        <name>substrate</name>
    </ligand>
</feature>
<feature type="binding site" evidence="1">
    <location>
        <position position="278"/>
    </location>
    <ligand>
        <name>Mg(2+)</name>
        <dbReference type="ChEBI" id="CHEBI:18420"/>
        <label>2</label>
    </ligand>
</feature>